<evidence type="ECO:0000255" key="1">
    <source>
        <dbReference type="HAMAP-Rule" id="MF_01838"/>
    </source>
</evidence>
<accession>A1SSJ9</accession>
<protein>
    <recommendedName>
        <fullName evidence="1">Enoyl-[acyl-carrier-protein] reductase [NADH]</fullName>
        <shortName evidence="1">ENR</shortName>
        <ecNumber evidence="1">1.3.1.9</ecNumber>
    </recommendedName>
</protein>
<name>FABV_PSYIN</name>
<proteinExistence type="inferred from homology"/>
<dbReference type="EC" id="1.3.1.9" evidence="1"/>
<dbReference type="EMBL" id="CP000510">
    <property type="protein sequence ID" value="ABM02464.1"/>
    <property type="molecule type" value="Genomic_DNA"/>
</dbReference>
<dbReference type="RefSeq" id="WP_011769023.1">
    <property type="nucleotide sequence ID" value="NC_008709.1"/>
</dbReference>
<dbReference type="SMR" id="A1SSJ9"/>
<dbReference type="STRING" id="357804.Ping_0610"/>
<dbReference type="KEGG" id="pin:Ping_0610"/>
<dbReference type="eggNOG" id="COG3007">
    <property type="taxonomic scope" value="Bacteria"/>
</dbReference>
<dbReference type="HOGENOM" id="CLU_057698_1_0_6"/>
<dbReference type="OrthoDB" id="9802260at2"/>
<dbReference type="UniPathway" id="UPA00094"/>
<dbReference type="Proteomes" id="UP000000639">
    <property type="component" value="Chromosome"/>
</dbReference>
<dbReference type="GO" id="GO:0004318">
    <property type="term" value="F:enoyl-[acyl-carrier-protein] reductase (NADH) activity"/>
    <property type="evidence" value="ECO:0007669"/>
    <property type="project" value="UniProtKB-UniRule"/>
</dbReference>
<dbReference type="GO" id="GO:0051287">
    <property type="term" value="F:NAD binding"/>
    <property type="evidence" value="ECO:0007669"/>
    <property type="project" value="UniProtKB-UniRule"/>
</dbReference>
<dbReference type="GO" id="GO:0050343">
    <property type="term" value="F:trans-2-enoyl-CoA reductase (NADH) activity"/>
    <property type="evidence" value="ECO:0007669"/>
    <property type="project" value="TreeGrafter"/>
</dbReference>
<dbReference type="GO" id="GO:0006633">
    <property type="term" value="P:fatty acid biosynthetic process"/>
    <property type="evidence" value="ECO:0007669"/>
    <property type="project" value="UniProtKB-UniRule"/>
</dbReference>
<dbReference type="FunFam" id="3.40.50.720:FF:000221">
    <property type="entry name" value="Enoyl-[acyl-carrier-protein] reductase [NADH]"/>
    <property type="match status" value="1"/>
</dbReference>
<dbReference type="Gene3D" id="3.40.50.720">
    <property type="entry name" value="NAD(P)-binding Rossmann-like Domain"/>
    <property type="match status" value="1"/>
</dbReference>
<dbReference type="HAMAP" id="MF_01838">
    <property type="entry name" value="FabV_reductase"/>
    <property type="match status" value="1"/>
</dbReference>
<dbReference type="InterPro" id="IPR024906">
    <property type="entry name" value="Eno_Rdtase_FAD-bd_dom"/>
</dbReference>
<dbReference type="InterPro" id="IPR024910">
    <property type="entry name" value="Enoyl-CoA_Rdtase_cat_dom"/>
</dbReference>
<dbReference type="InterPro" id="IPR050048">
    <property type="entry name" value="FabV-like_NADH_b"/>
</dbReference>
<dbReference type="InterPro" id="IPR010758">
    <property type="entry name" value="Trans-2-enoyl-CoA_reductase"/>
</dbReference>
<dbReference type="NCBIfam" id="NF043048">
    <property type="entry name" value="EnoyACPredFabV"/>
    <property type="match status" value="1"/>
</dbReference>
<dbReference type="NCBIfam" id="NF010177">
    <property type="entry name" value="PRK13656.1"/>
    <property type="match status" value="1"/>
</dbReference>
<dbReference type="PANTHER" id="PTHR37480">
    <property type="entry name" value="ENOYL-[ACYL-CARRIER-PROTEIN] REDUCTASE [NADH]"/>
    <property type="match status" value="1"/>
</dbReference>
<dbReference type="PANTHER" id="PTHR37480:SF1">
    <property type="entry name" value="ENOYL-[ACYL-CARRIER-PROTEIN] REDUCTASE [NADH]"/>
    <property type="match status" value="1"/>
</dbReference>
<dbReference type="Pfam" id="PF07055">
    <property type="entry name" value="Eno-Rase_FAD_bd"/>
    <property type="match status" value="1"/>
</dbReference>
<dbReference type="Pfam" id="PF12242">
    <property type="entry name" value="Eno-Rase_NADH_b"/>
    <property type="match status" value="1"/>
</dbReference>
<dbReference type="Pfam" id="PF12241">
    <property type="entry name" value="Enoyl_reductase"/>
    <property type="match status" value="1"/>
</dbReference>
<comment type="function">
    <text evidence="1">Involved in the final reduction of the elongation cycle of fatty acid synthesis (FAS II). Catalyzes the reduction of a carbon-carbon double bond in an enoyl moiety that is covalently linked to an acyl carrier protein (ACP).</text>
</comment>
<comment type="catalytic activity">
    <reaction evidence="1">
        <text>a 2,3-saturated acyl-[ACP] + NAD(+) = a (2E)-enoyl-[ACP] + NADH + H(+)</text>
        <dbReference type="Rhea" id="RHEA:10240"/>
        <dbReference type="Rhea" id="RHEA-COMP:9925"/>
        <dbReference type="Rhea" id="RHEA-COMP:9926"/>
        <dbReference type="ChEBI" id="CHEBI:15378"/>
        <dbReference type="ChEBI" id="CHEBI:57540"/>
        <dbReference type="ChEBI" id="CHEBI:57945"/>
        <dbReference type="ChEBI" id="CHEBI:78784"/>
        <dbReference type="ChEBI" id="CHEBI:78785"/>
        <dbReference type="EC" id="1.3.1.9"/>
    </reaction>
</comment>
<comment type="pathway">
    <text evidence="1">Lipid metabolism; fatty acid biosynthesis.</text>
</comment>
<comment type="subunit">
    <text evidence="1">Monomer.</text>
</comment>
<comment type="similarity">
    <text evidence="1">Belongs to the TER reductase family.</text>
</comment>
<keyword id="KW-0275">Fatty acid biosynthesis</keyword>
<keyword id="KW-0276">Fatty acid metabolism</keyword>
<keyword id="KW-0444">Lipid biosynthesis</keyword>
<keyword id="KW-0443">Lipid metabolism</keyword>
<keyword id="KW-0520">NAD</keyword>
<keyword id="KW-0560">Oxidoreductase</keyword>
<keyword id="KW-1185">Reference proteome</keyword>
<gene>
    <name evidence="1" type="primary">fabV</name>
    <name type="ordered locus">Ping_0610</name>
</gene>
<sequence length="400" mass="43937">MIIKPKIRGFICTTTHPVGCEKNIQAQIEYTKQQGKIANGPKRVLVIGSSAGYGMSSRVAAAYGSDASTIGVFFEKPATEKKPGSAGWYNSAAFEKQAKADGLYAKSINGDAFSHEIKAKVVELIKQDLGQIDAIIYSVAAPVRKLPDTGEVIRSSLKPIGETYISTAIDTNKDVIINATVEPATEEEVADTVTVMGGQDWELWLSALGEAGVLAEGLKTVAYSYIGTELTWPIYWDGALGKAKIDLDRASTAIQAQLAPLNGEAYVSVQKSVVTQASSAIPVMPLYISMVFKIMKEKGLHEGCMEQIYRLFTSQLYKQDGSAPETDQARRIRLDDWELRDDVQQACKELWPKITTENLFELTDYKEYKEEFVQLFGFSIDGVDYDADVDTVVEFDCLSV</sequence>
<feature type="chain" id="PRO_1000070492" description="Enoyl-[acyl-carrier-protein] reductase [NADH]">
    <location>
        <begin position="1"/>
        <end position="400"/>
    </location>
</feature>
<feature type="active site" description="Proton donor" evidence="1">
    <location>
        <position position="235"/>
    </location>
</feature>
<feature type="binding site" evidence="1">
    <location>
        <begin position="74"/>
        <end position="75"/>
    </location>
    <ligand>
        <name>NAD(+)</name>
        <dbReference type="ChEBI" id="CHEBI:57540"/>
    </ligand>
</feature>
<feature type="binding site" evidence="1">
    <location>
        <begin position="111"/>
        <end position="112"/>
    </location>
    <ligand>
        <name>NAD(+)</name>
        <dbReference type="ChEBI" id="CHEBI:57540"/>
    </ligand>
</feature>
<feature type="binding site" evidence="1">
    <location>
        <begin position="139"/>
        <end position="140"/>
    </location>
    <ligand>
        <name>NAD(+)</name>
        <dbReference type="ChEBI" id="CHEBI:57540"/>
    </ligand>
</feature>
<feature type="binding site" evidence="1">
    <location>
        <position position="225"/>
    </location>
    <ligand>
        <name>substrate</name>
    </ligand>
</feature>
<feature type="binding site" evidence="1">
    <location>
        <position position="244"/>
    </location>
    <ligand>
        <name>NAD(+)</name>
        <dbReference type="ChEBI" id="CHEBI:57540"/>
    </ligand>
</feature>
<feature type="binding site" evidence="1">
    <location>
        <begin position="273"/>
        <end position="275"/>
    </location>
    <ligand>
        <name>NAD(+)</name>
        <dbReference type="ChEBI" id="CHEBI:57540"/>
    </ligand>
</feature>
<feature type="site" description="Plays an important role in discriminating NADH against NADPH" evidence="1">
    <location>
        <position position="75"/>
    </location>
</feature>
<organism>
    <name type="scientific">Psychromonas ingrahamii (strain DSM 17664 / CCUG 51855 / 37)</name>
    <dbReference type="NCBI Taxonomy" id="357804"/>
    <lineage>
        <taxon>Bacteria</taxon>
        <taxon>Pseudomonadati</taxon>
        <taxon>Pseudomonadota</taxon>
        <taxon>Gammaproteobacteria</taxon>
        <taxon>Alteromonadales</taxon>
        <taxon>Psychromonadaceae</taxon>
        <taxon>Psychromonas</taxon>
    </lineage>
</organism>
<reference key="1">
    <citation type="journal article" date="2008" name="BMC Genomics">
        <title>Genomics of an extreme psychrophile, Psychromonas ingrahamii.</title>
        <authorList>
            <person name="Riley M."/>
            <person name="Staley J.T."/>
            <person name="Danchin A."/>
            <person name="Wang T.Z."/>
            <person name="Brettin T.S."/>
            <person name="Hauser L.J."/>
            <person name="Land M.L."/>
            <person name="Thompson L.S."/>
        </authorList>
    </citation>
    <scope>NUCLEOTIDE SEQUENCE [LARGE SCALE GENOMIC DNA]</scope>
    <source>
        <strain>DSM 17664 / CCUG 51855 / 37</strain>
    </source>
</reference>